<organism>
    <name type="scientific">Arabidopsis thaliana</name>
    <name type="common">Mouse-ear cress</name>
    <dbReference type="NCBI Taxonomy" id="3702"/>
    <lineage>
        <taxon>Eukaryota</taxon>
        <taxon>Viridiplantae</taxon>
        <taxon>Streptophyta</taxon>
        <taxon>Embryophyta</taxon>
        <taxon>Tracheophyta</taxon>
        <taxon>Spermatophyta</taxon>
        <taxon>Magnoliopsida</taxon>
        <taxon>eudicotyledons</taxon>
        <taxon>Gunneridae</taxon>
        <taxon>Pentapetalae</taxon>
        <taxon>rosids</taxon>
        <taxon>malvids</taxon>
        <taxon>Brassicales</taxon>
        <taxon>Brassicaceae</taxon>
        <taxon>Camelineae</taxon>
        <taxon>Arabidopsis</taxon>
    </lineage>
</organism>
<protein>
    <recommendedName>
        <fullName>Pentatricopeptide repeat-containing protein At3g18020</fullName>
    </recommendedName>
</protein>
<name>PP240_ARATH</name>
<keyword id="KW-1185">Reference proteome</keyword>
<keyword id="KW-0677">Repeat</keyword>
<comment type="similarity">
    <text evidence="1">Belongs to the PPR family. P subfamily.</text>
</comment>
<comment type="online information" name="Pentatricopeptide repeat proteins">
    <link uri="https://ppr.plantenergy.uwa.edu.au"/>
</comment>
<gene>
    <name type="ordered locus">At3g18020</name>
    <name type="ORF">MBG14.2</name>
</gene>
<accession>Q9LSK8</accession>
<proteinExistence type="evidence at transcript level"/>
<reference key="1">
    <citation type="journal article" date="2000" name="DNA Res.">
        <title>Structural analysis of Arabidopsis thaliana chromosome 3. II. Sequence features of the 4,251,695 bp regions covered by 90 P1, TAC and BAC clones.</title>
        <authorList>
            <person name="Kaneko T."/>
            <person name="Katoh T."/>
            <person name="Sato S."/>
            <person name="Nakamura Y."/>
            <person name="Asamizu E."/>
            <person name="Tabata S."/>
        </authorList>
    </citation>
    <scope>NUCLEOTIDE SEQUENCE [LARGE SCALE GENOMIC DNA]</scope>
    <source>
        <strain>cv. Columbia</strain>
    </source>
</reference>
<reference key="2">
    <citation type="journal article" date="2017" name="Plant J.">
        <title>Araport11: a complete reannotation of the Arabidopsis thaliana reference genome.</title>
        <authorList>
            <person name="Cheng C.Y."/>
            <person name="Krishnakumar V."/>
            <person name="Chan A.P."/>
            <person name="Thibaud-Nissen F."/>
            <person name="Schobel S."/>
            <person name="Town C.D."/>
        </authorList>
    </citation>
    <scope>GENOME REANNOTATION</scope>
    <source>
        <strain>cv. Columbia</strain>
    </source>
</reference>
<reference key="3">
    <citation type="journal article" date="2004" name="Plant Cell">
        <title>Genome-wide analysis of Arabidopsis pentatricopeptide repeat proteins reveals their essential role in organelle biogenesis.</title>
        <authorList>
            <person name="Lurin C."/>
            <person name="Andres C."/>
            <person name="Aubourg S."/>
            <person name="Bellaoui M."/>
            <person name="Bitton F."/>
            <person name="Bruyere C."/>
            <person name="Caboche M."/>
            <person name="Debast C."/>
            <person name="Gualberto J."/>
            <person name="Hoffmann B."/>
            <person name="Lecharny A."/>
            <person name="Le Ret M."/>
            <person name="Martin-Magniette M.-L."/>
            <person name="Mireau H."/>
            <person name="Peeters N."/>
            <person name="Renou J.-P."/>
            <person name="Szurek B."/>
            <person name="Taconnat L."/>
            <person name="Small I."/>
        </authorList>
    </citation>
    <scope>GENE FAMILY</scope>
</reference>
<feature type="chain" id="PRO_0000356099" description="Pentatricopeptide repeat-containing protein At3g18020">
    <location>
        <begin position="1"/>
        <end position="688"/>
    </location>
</feature>
<feature type="repeat" description="PPR 1">
    <location>
        <begin position="53"/>
        <end position="88"/>
    </location>
</feature>
<feature type="repeat" description="PPR 2">
    <location>
        <begin position="89"/>
        <end position="123"/>
    </location>
</feature>
<feature type="repeat" description="PPR 3">
    <location>
        <begin position="124"/>
        <end position="158"/>
    </location>
</feature>
<feature type="repeat" description="PPR 4">
    <location>
        <begin position="161"/>
        <end position="195"/>
    </location>
</feature>
<feature type="repeat" description="PPR 5">
    <location>
        <begin position="196"/>
        <end position="230"/>
    </location>
</feature>
<feature type="repeat" description="PPR 6">
    <location>
        <begin position="231"/>
        <end position="261"/>
    </location>
</feature>
<feature type="repeat" description="PPR 7">
    <location>
        <begin position="271"/>
        <end position="305"/>
    </location>
</feature>
<feature type="repeat" description="PPR 8">
    <location>
        <begin position="306"/>
        <end position="340"/>
    </location>
</feature>
<feature type="repeat" description="PPR 9">
    <location>
        <begin position="341"/>
        <end position="375"/>
    </location>
</feature>
<feature type="repeat" description="PPR 10">
    <location>
        <begin position="376"/>
        <end position="406"/>
    </location>
</feature>
<feature type="repeat" description="PPR 11">
    <location>
        <begin position="411"/>
        <end position="445"/>
    </location>
</feature>
<feature type="repeat" description="PPR 12">
    <location>
        <begin position="446"/>
        <end position="480"/>
    </location>
</feature>
<feature type="repeat" description="PPR 13">
    <location>
        <begin position="482"/>
        <end position="517"/>
    </location>
</feature>
<feature type="repeat" description="PPR 14">
    <location>
        <begin position="518"/>
        <end position="552"/>
    </location>
</feature>
<feature type="repeat" description="PPR 15">
    <location>
        <begin position="553"/>
        <end position="583"/>
    </location>
</feature>
<feature type="repeat" description="PPR 16">
    <location>
        <begin position="588"/>
        <end position="622"/>
    </location>
</feature>
<feature type="repeat" description="PPR 17">
    <location>
        <begin position="623"/>
        <end position="657"/>
    </location>
</feature>
<sequence>MFFVTRLRLRARENGFFFSKSLSFSSASVLKSDDVEGEDDAIEAEDRRRSVTDRAYWRRRIHSICAVRRNPDEALRILDGLCLRGYRPDSLNLSSVIHSLCDAGRFDEAHRRFLLFLASGFIPDERTCNVIIARLLYSRSPVSTLGVIHRLIGFKKEFVPSLTNYNRLMNQLCTIYRVIDAHKLVFDMRNRGHLPDVVTFTTLIGGYCEIRELEVAHKVFDEMRVCGIRPNSLTLSVLIGGFLKMRDVETGRKLMKELWEYMKNETDTSMKAAAFANLVDSMCREGYFNDIFEIAENMSLCESVNVEFAYGHMIDSLCRYRRNHGAARIVYIMKSKGLKPRRTSYNAIIHGLCKDGGCMRAYQLLEEGSEFEFFPSEYTYKLLMESLCKELDTGKARNVLELMLRKEGADRTRIYNIYLRGLCVMDNPTEILNVLVSMLQGDCRPDEYTLNTVINGLCKMGRVDDAMKVLDDMMTGKFCAPDAVTLNTVMCGLLAQGRAEEALDVLNRVMPENKIKPGVVAYNAVIRGLFKLHKGDEAMSVFGQLEKASVTADSTTYAIIIDGLCVTNKVDMAKKFWDDVIWPSGRHDAFVYAAFLKGLCQSGYLSDACHFLYDLADSGAIPNVVCYNTVIAECSRSGLKREAYQILEEMRKNGQAPDAVTWRILDKLHDSMDLTVERELISNPATSG</sequence>
<dbReference type="EMBL" id="AB026641">
    <property type="protein sequence ID" value="BAB01330.1"/>
    <property type="molecule type" value="Genomic_DNA"/>
</dbReference>
<dbReference type="EMBL" id="CP002686">
    <property type="protein sequence ID" value="AEE76035.1"/>
    <property type="molecule type" value="Genomic_DNA"/>
</dbReference>
<dbReference type="RefSeq" id="NP_188429.1">
    <property type="nucleotide sequence ID" value="NM_112683.2"/>
</dbReference>
<dbReference type="SMR" id="Q9LSK8"/>
<dbReference type="FunCoup" id="Q9LSK8">
    <property type="interactions" value="52"/>
</dbReference>
<dbReference type="STRING" id="3702.Q9LSK8"/>
<dbReference type="iPTMnet" id="Q9LSK8"/>
<dbReference type="PaxDb" id="3702-AT3G18020.1"/>
<dbReference type="ProteomicsDB" id="248951"/>
<dbReference type="EnsemblPlants" id="AT3G18020.1">
    <property type="protein sequence ID" value="AT3G18020.1"/>
    <property type="gene ID" value="AT3G18020"/>
</dbReference>
<dbReference type="GeneID" id="821326"/>
<dbReference type="Gramene" id="AT3G18020.1">
    <property type="protein sequence ID" value="AT3G18020.1"/>
    <property type="gene ID" value="AT3G18020"/>
</dbReference>
<dbReference type="KEGG" id="ath:AT3G18020"/>
<dbReference type="Araport" id="AT3G18020"/>
<dbReference type="TAIR" id="AT3G18020"/>
<dbReference type="eggNOG" id="KOG4197">
    <property type="taxonomic scope" value="Eukaryota"/>
</dbReference>
<dbReference type="HOGENOM" id="CLU_002706_49_2_1"/>
<dbReference type="InParanoid" id="Q9LSK8"/>
<dbReference type="OMA" id="HALCDSN"/>
<dbReference type="PhylomeDB" id="Q9LSK8"/>
<dbReference type="PRO" id="PR:Q9LSK8"/>
<dbReference type="Proteomes" id="UP000006548">
    <property type="component" value="Chromosome 3"/>
</dbReference>
<dbReference type="ExpressionAtlas" id="Q9LSK8">
    <property type="expression patterns" value="baseline and differential"/>
</dbReference>
<dbReference type="Gene3D" id="1.25.40.10">
    <property type="entry name" value="Tetratricopeptide repeat domain"/>
    <property type="match status" value="7"/>
</dbReference>
<dbReference type="InterPro" id="IPR002885">
    <property type="entry name" value="Pentatricopeptide_rpt"/>
</dbReference>
<dbReference type="InterPro" id="IPR050872">
    <property type="entry name" value="PPR_P_subfamily"/>
</dbReference>
<dbReference type="InterPro" id="IPR011990">
    <property type="entry name" value="TPR-like_helical_dom_sf"/>
</dbReference>
<dbReference type="NCBIfam" id="TIGR00756">
    <property type="entry name" value="PPR"/>
    <property type="match status" value="6"/>
</dbReference>
<dbReference type="PANTHER" id="PTHR46128">
    <property type="entry name" value="MITOCHONDRIAL GROUP I INTRON SPLICING FACTOR CCM1"/>
    <property type="match status" value="1"/>
</dbReference>
<dbReference type="PANTHER" id="PTHR46128:SF211">
    <property type="entry name" value="PENTACOTRIPEPTIDE-REPEAT REGION OF PRORP DOMAIN-CONTAINING PROTEIN"/>
    <property type="match status" value="1"/>
</dbReference>
<dbReference type="Pfam" id="PF01535">
    <property type="entry name" value="PPR"/>
    <property type="match status" value="2"/>
</dbReference>
<dbReference type="Pfam" id="PF12854">
    <property type="entry name" value="PPR_1"/>
    <property type="match status" value="1"/>
</dbReference>
<dbReference type="Pfam" id="PF13041">
    <property type="entry name" value="PPR_2"/>
    <property type="match status" value="4"/>
</dbReference>
<dbReference type="PROSITE" id="PS51375">
    <property type="entry name" value="PPR"/>
    <property type="match status" value="16"/>
</dbReference>
<evidence type="ECO:0000305" key="1"/>